<organism>
    <name type="scientific">Streptomyces coelicolor (strain ATCC BAA-471 / A3(2) / M145)</name>
    <dbReference type="NCBI Taxonomy" id="100226"/>
    <lineage>
        <taxon>Bacteria</taxon>
        <taxon>Bacillati</taxon>
        <taxon>Actinomycetota</taxon>
        <taxon>Actinomycetes</taxon>
        <taxon>Kitasatosporales</taxon>
        <taxon>Streptomycetaceae</taxon>
        <taxon>Streptomyces</taxon>
        <taxon>Streptomyces albidoflavus group</taxon>
    </lineage>
</organism>
<accession>Q9FCC9</accession>
<sequence>MTRPSARHVLPEFTERTSAGTRTSDPYSKLLQERIVFLGTPVDETSANDVTAQLMYLEHQAPDRDIELYVNSPGGSFTAMTAIYDTMRYVACDVATTCLGQAGPSAAVLLAAGTPGKRAALPGARVVLHQPALTEPVRGQAGDLAVHAAELVRVRARLEEILVRHTGRTPGQVAADLERDTVLDARQAREYGLVDRIVPGRRTPPASSGAR</sequence>
<comment type="function">
    <text>Has lost one of the conserved residue (Ser) proposed to be part of the active site. Therefore it could be inactive.</text>
</comment>
<comment type="similarity">
    <text evidence="1">Belongs to the peptidase S14 family.</text>
</comment>
<keyword id="KW-1185">Reference proteome</keyword>
<proteinExistence type="inferred from homology"/>
<protein>
    <recommendedName>
        <fullName>Putative ATP-dependent Clp protease proteolytic subunit-like</fullName>
    </recommendedName>
    <alternativeName>
        <fullName evidence="1">Endopeptidase Clp-like</fullName>
    </alternativeName>
</protein>
<gene>
    <name evidence="1" type="primary">clpP5</name>
    <name type="ordered locus">SCO1238</name>
    <name type="ORF">2SCG1.13</name>
</gene>
<evidence type="ECO:0000255" key="1">
    <source>
        <dbReference type="HAMAP-Rule" id="MF_00444"/>
    </source>
</evidence>
<evidence type="ECO:0000256" key="2">
    <source>
        <dbReference type="SAM" id="MobiDB-lite"/>
    </source>
</evidence>
<reference key="1">
    <citation type="journal article" date="2002" name="Nature">
        <title>Complete genome sequence of the model actinomycete Streptomyces coelicolor A3(2).</title>
        <authorList>
            <person name="Bentley S.D."/>
            <person name="Chater K.F."/>
            <person name="Cerdeno-Tarraga A.-M."/>
            <person name="Challis G.L."/>
            <person name="Thomson N.R."/>
            <person name="James K.D."/>
            <person name="Harris D.E."/>
            <person name="Quail M.A."/>
            <person name="Kieser H."/>
            <person name="Harper D."/>
            <person name="Bateman A."/>
            <person name="Brown S."/>
            <person name="Chandra G."/>
            <person name="Chen C.W."/>
            <person name="Collins M."/>
            <person name="Cronin A."/>
            <person name="Fraser A."/>
            <person name="Goble A."/>
            <person name="Hidalgo J."/>
            <person name="Hornsby T."/>
            <person name="Howarth S."/>
            <person name="Huang C.-H."/>
            <person name="Kieser T."/>
            <person name="Larke L."/>
            <person name="Murphy L.D."/>
            <person name="Oliver K."/>
            <person name="O'Neil S."/>
            <person name="Rabbinowitsch E."/>
            <person name="Rajandream M.A."/>
            <person name="Rutherford K.M."/>
            <person name="Rutter S."/>
            <person name="Seeger K."/>
            <person name="Saunders D."/>
            <person name="Sharp S."/>
            <person name="Squares R."/>
            <person name="Squares S."/>
            <person name="Taylor K."/>
            <person name="Warren T."/>
            <person name="Wietzorrek A."/>
            <person name="Woodward J.R."/>
            <person name="Barrell B.G."/>
            <person name="Parkhill J."/>
            <person name="Hopwood D.A."/>
        </authorList>
    </citation>
    <scope>NUCLEOTIDE SEQUENCE [LARGE SCALE GENOMIC DNA]</scope>
    <source>
        <strain>ATCC BAA-471 / A3(2) / M145</strain>
    </source>
</reference>
<feature type="chain" id="PRO_0000179668" description="Putative ATP-dependent Clp protease proteolytic subunit-like">
    <location>
        <begin position="1"/>
        <end position="211"/>
    </location>
</feature>
<feature type="region of interest" description="Disordered" evidence="2">
    <location>
        <begin position="1"/>
        <end position="24"/>
    </location>
</feature>
<feature type="active site" evidence="1">
    <location>
        <position position="129"/>
    </location>
</feature>
<dbReference type="EMBL" id="AL939108">
    <property type="protein sequence ID" value="CAC01462.1"/>
    <property type="molecule type" value="Genomic_DNA"/>
</dbReference>
<dbReference type="RefSeq" id="NP_625526.1">
    <property type="nucleotide sequence ID" value="NC_003888.3"/>
</dbReference>
<dbReference type="RefSeq" id="WP_003977593.1">
    <property type="nucleotide sequence ID" value="NZ_VNID01000006.1"/>
</dbReference>
<dbReference type="SMR" id="Q9FCC9"/>
<dbReference type="STRING" id="100226.gene:17758821"/>
<dbReference type="MEROPS" id="S14.009"/>
<dbReference type="PaxDb" id="100226-SCO1238"/>
<dbReference type="KEGG" id="sco:SCO1238"/>
<dbReference type="PATRIC" id="fig|100226.15.peg.1237"/>
<dbReference type="eggNOG" id="COG0740">
    <property type="taxonomic scope" value="Bacteria"/>
</dbReference>
<dbReference type="HOGENOM" id="CLU_058707_3_2_11"/>
<dbReference type="InParanoid" id="Q9FCC9"/>
<dbReference type="OrthoDB" id="9802800at2"/>
<dbReference type="PhylomeDB" id="Q9FCC9"/>
<dbReference type="Proteomes" id="UP000001973">
    <property type="component" value="Chromosome"/>
</dbReference>
<dbReference type="GO" id="GO:0005737">
    <property type="term" value="C:cytoplasm"/>
    <property type="evidence" value="ECO:0007669"/>
    <property type="project" value="UniProtKB-UniRule"/>
</dbReference>
<dbReference type="GO" id="GO:0009368">
    <property type="term" value="C:endopeptidase Clp complex"/>
    <property type="evidence" value="ECO:0000318"/>
    <property type="project" value="GO_Central"/>
</dbReference>
<dbReference type="GO" id="GO:0004176">
    <property type="term" value="F:ATP-dependent peptidase activity"/>
    <property type="evidence" value="ECO:0000318"/>
    <property type="project" value="GO_Central"/>
</dbReference>
<dbReference type="GO" id="GO:0051117">
    <property type="term" value="F:ATPase binding"/>
    <property type="evidence" value="ECO:0000318"/>
    <property type="project" value="GO_Central"/>
</dbReference>
<dbReference type="GO" id="GO:0004252">
    <property type="term" value="F:serine-type endopeptidase activity"/>
    <property type="evidence" value="ECO:0000318"/>
    <property type="project" value="GO_Central"/>
</dbReference>
<dbReference type="GO" id="GO:0006515">
    <property type="term" value="P:protein quality control for misfolded or incompletely synthesized proteins"/>
    <property type="evidence" value="ECO:0000318"/>
    <property type="project" value="GO_Central"/>
</dbReference>
<dbReference type="CDD" id="cd07017">
    <property type="entry name" value="S14_ClpP_2"/>
    <property type="match status" value="1"/>
</dbReference>
<dbReference type="FunFam" id="3.90.226.10:FF:000002">
    <property type="entry name" value="ATP-dependent Clp protease proteolytic subunit"/>
    <property type="match status" value="1"/>
</dbReference>
<dbReference type="Gene3D" id="3.90.226.10">
    <property type="entry name" value="2-enoyl-CoA Hydratase, Chain A, domain 1"/>
    <property type="match status" value="1"/>
</dbReference>
<dbReference type="HAMAP" id="MF_00444">
    <property type="entry name" value="ClpP"/>
    <property type="match status" value="1"/>
</dbReference>
<dbReference type="InterPro" id="IPR001907">
    <property type="entry name" value="ClpP"/>
</dbReference>
<dbReference type="InterPro" id="IPR029045">
    <property type="entry name" value="ClpP/crotonase-like_dom_sf"/>
</dbReference>
<dbReference type="InterPro" id="IPR023562">
    <property type="entry name" value="ClpP/TepA"/>
</dbReference>
<dbReference type="NCBIfam" id="NF009205">
    <property type="entry name" value="PRK12553.1"/>
    <property type="match status" value="1"/>
</dbReference>
<dbReference type="PANTHER" id="PTHR10381">
    <property type="entry name" value="ATP-DEPENDENT CLP PROTEASE PROTEOLYTIC SUBUNIT"/>
    <property type="match status" value="1"/>
</dbReference>
<dbReference type="PANTHER" id="PTHR10381:SF26">
    <property type="entry name" value="ATP-DEPENDENT CLP PROTEASE PROTEOLYTIC SUBUNIT-LIKE-RELATED"/>
    <property type="match status" value="1"/>
</dbReference>
<dbReference type="Pfam" id="PF00574">
    <property type="entry name" value="CLP_protease"/>
    <property type="match status" value="1"/>
</dbReference>
<dbReference type="PRINTS" id="PR00127">
    <property type="entry name" value="CLPPROTEASEP"/>
</dbReference>
<dbReference type="SUPFAM" id="SSF52096">
    <property type="entry name" value="ClpP/crotonase"/>
    <property type="match status" value="1"/>
</dbReference>
<name>CLPP5_STRCO</name>